<gene>
    <name evidence="1" type="primary">folE2</name>
    <name type="ordered locus">Pput_2420</name>
</gene>
<organism>
    <name type="scientific">Pseudomonas putida (strain ATCC 700007 / DSM 6899 / JCM 31910 / BCRC 17059 / LMG 24140 / F1)</name>
    <dbReference type="NCBI Taxonomy" id="351746"/>
    <lineage>
        <taxon>Bacteria</taxon>
        <taxon>Pseudomonadati</taxon>
        <taxon>Pseudomonadota</taxon>
        <taxon>Gammaproteobacteria</taxon>
        <taxon>Pseudomonadales</taxon>
        <taxon>Pseudomonadaceae</taxon>
        <taxon>Pseudomonas</taxon>
    </lineage>
</organism>
<sequence>MSSALPDVSVTDLTHSLSPLQWVGMQGIDLPVRIEEPTYQRELHARADVQVDLPAPHVKGIHMSRLYCLLDAWGQAAAVSPASLFALLQEMIDSHQDCGSRNARLRLDFDLLVRRPALVTEGLSGWKSYSVHVLATKVGGALNLSIEVRIGYSSTCPCSAALSRQLIEDGFLRTFKDQPLLEASAVAQWLRSNASLATPHSQRSEARVRVTVPSDAPDLGLLALIDQVEGALRTPVQTAVKRADEQAFAALNGQNLMFVEDAARRIQASLRGYRDSQVHVRHLESLHPHDASAWSAPQASAPDQQESFATGNER</sequence>
<protein>
    <recommendedName>
        <fullName evidence="1">GTP cyclohydrolase FolE2</fullName>
        <ecNumber evidence="1">3.5.4.16</ecNumber>
    </recommendedName>
</protein>
<dbReference type="EC" id="3.5.4.16" evidence="1"/>
<dbReference type="EMBL" id="CP000712">
    <property type="protein sequence ID" value="ABQ78558.1"/>
    <property type="status" value="ALT_INIT"/>
    <property type="molecule type" value="Genomic_DNA"/>
</dbReference>
<dbReference type="SMR" id="A5W348"/>
<dbReference type="KEGG" id="ppf:Pput_2420"/>
<dbReference type="eggNOG" id="COG1469">
    <property type="taxonomic scope" value="Bacteria"/>
</dbReference>
<dbReference type="HOGENOM" id="CLU_062816_0_0_6"/>
<dbReference type="UniPathway" id="UPA00848">
    <property type="reaction ID" value="UER00151"/>
</dbReference>
<dbReference type="GO" id="GO:0003934">
    <property type="term" value="F:GTP cyclohydrolase I activity"/>
    <property type="evidence" value="ECO:0007669"/>
    <property type="project" value="UniProtKB-UniRule"/>
</dbReference>
<dbReference type="GO" id="GO:0046654">
    <property type="term" value="P:tetrahydrofolate biosynthetic process"/>
    <property type="evidence" value="ECO:0007669"/>
    <property type="project" value="UniProtKB-UniRule"/>
</dbReference>
<dbReference type="Gene3D" id="3.10.270.10">
    <property type="entry name" value="Urate Oxidase"/>
    <property type="match status" value="1"/>
</dbReference>
<dbReference type="HAMAP" id="MF_01527_B">
    <property type="entry name" value="GTP_cyclohydrol_B"/>
    <property type="match status" value="1"/>
</dbReference>
<dbReference type="InterPro" id="IPR022838">
    <property type="entry name" value="GTP_cyclohydrolase_FolE2"/>
</dbReference>
<dbReference type="InterPro" id="IPR003801">
    <property type="entry name" value="GTP_cyclohydrolase_FolE2/MptA"/>
</dbReference>
<dbReference type="NCBIfam" id="NF010200">
    <property type="entry name" value="PRK13674.1-1"/>
    <property type="match status" value="1"/>
</dbReference>
<dbReference type="PANTHER" id="PTHR36445">
    <property type="entry name" value="GTP CYCLOHYDROLASE MPTA"/>
    <property type="match status" value="1"/>
</dbReference>
<dbReference type="PANTHER" id="PTHR36445:SF1">
    <property type="entry name" value="GTP CYCLOHYDROLASE MPTA"/>
    <property type="match status" value="1"/>
</dbReference>
<dbReference type="Pfam" id="PF02649">
    <property type="entry name" value="GCHY-1"/>
    <property type="match status" value="1"/>
</dbReference>
<feature type="chain" id="PRO_0000316533" description="GTP cyclohydrolase FolE2">
    <location>
        <begin position="1"/>
        <end position="314"/>
    </location>
</feature>
<feature type="region of interest" description="Disordered" evidence="2">
    <location>
        <begin position="290"/>
        <end position="314"/>
    </location>
</feature>
<feature type="compositionally biased region" description="Low complexity" evidence="2">
    <location>
        <begin position="291"/>
        <end position="305"/>
    </location>
</feature>
<feature type="site" description="May be catalytically important" evidence="1">
    <location>
        <position position="156"/>
    </location>
</feature>
<keyword id="KW-0378">Hydrolase</keyword>
<comment type="function">
    <text evidence="1">Converts GTP to 7,8-dihydroneopterin triphosphate.</text>
</comment>
<comment type="catalytic activity">
    <reaction evidence="1">
        <text>GTP + H2O = 7,8-dihydroneopterin 3'-triphosphate + formate + H(+)</text>
        <dbReference type="Rhea" id="RHEA:17473"/>
        <dbReference type="ChEBI" id="CHEBI:15377"/>
        <dbReference type="ChEBI" id="CHEBI:15378"/>
        <dbReference type="ChEBI" id="CHEBI:15740"/>
        <dbReference type="ChEBI" id="CHEBI:37565"/>
        <dbReference type="ChEBI" id="CHEBI:58462"/>
        <dbReference type="EC" id="3.5.4.16"/>
    </reaction>
</comment>
<comment type="pathway">
    <text evidence="1">Cofactor biosynthesis; 7,8-dihydroneopterin triphosphate biosynthesis; 7,8-dihydroneopterin triphosphate from GTP: step 1/1.</text>
</comment>
<comment type="similarity">
    <text evidence="1">Belongs to the GTP cyclohydrolase IV family.</text>
</comment>
<comment type="sequence caution" evidence="3">
    <conflict type="erroneous initiation">
        <sequence resource="EMBL-CDS" id="ABQ78558"/>
    </conflict>
</comment>
<accession>A5W348</accession>
<name>GCH4_PSEP1</name>
<proteinExistence type="inferred from homology"/>
<evidence type="ECO:0000255" key="1">
    <source>
        <dbReference type="HAMAP-Rule" id="MF_01527"/>
    </source>
</evidence>
<evidence type="ECO:0000256" key="2">
    <source>
        <dbReference type="SAM" id="MobiDB-lite"/>
    </source>
</evidence>
<evidence type="ECO:0000305" key="3"/>
<reference key="1">
    <citation type="submission" date="2007-05" db="EMBL/GenBank/DDBJ databases">
        <title>Complete sequence of Pseudomonas putida F1.</title>
        <authorList>
            <consortium name="US DOE Joint Genome Institute"/>
            <person name="Copeland A."/>
            <person name="Lucas S."/>
            <person name="Lapidus A."/>
            <person name="Barry K."/>
            <person name="Detter J.C."/>
            <person name="Glavina del Rio T."/>
            <person name="Hammon N."/>
            <person name="Israni S."/>
            <person name="Dalin E."/>
            <person name="Tice H."/>
            <person name="Pitluck S."/>
            <person name="Chain P."/>
            <person name="Malfatti S."/>
            <person name="Shin M."/>
            <person name="Vergez L."/>
            <person name="Schmutz J."/>
            <person name="Larimer F."/>
            <person name="Land M."/>
            <person name="Hauser L."/>
            <person name="Kyrpides N."/>
            <person name="Lykidis A."/>
            <person name="Parales R."/>
            <person name="Richardson P."/>
        </authorList>
    </citation>
    <scope>NUCLEOTIDE SEQUENCE [LARGE SCALE GENOMIC DNA]</scope>
    <source>
        <strain>ATCC 700007 / DSM 6899 / JCM 31910 / BCRC 17059 / LMG 24140 / F1</strain>
    </source>
</reference>